<protein>
    <recommendedName>
        <fullName evidence="5">Inclusion membrane protein F</fullName>
    </recommendedName>
</protein>
<accession>B0B9M5</accession>
<accession>O84119</accession>
<accession>Q9RPP9</accession>
<gene>
    <name evidence="5" type="primary">incF</name>
    <name type="ordered locus">CTL0372</name>
</gene>
<proteinExistence type="evidence at protein level"/>
<keyword id="KW-1043">Host membrane</keyword>
<keyword id="KW-0472">Membrane</keyword>
<keyword id="KW-0964">Secreted</keyword>
<keyword id="KW-0812">Transmembrane</keyword>
<keyword id="KW-1133">Transmembrane helix</keyword>
<keyword id="KW-0843">Virulence</keyword>
<evidence type="ECO:0000255" key="1"/>
<evidence type="ECO:0000269" key="2">
    <source>
    </source>
</evidence>
<evidence type="ECO:0000269" key="3">
    <source>
    </source>
</evidence>
<evidence type="ECO:0000269" key="4">
    <source>
    </source>
</evidence>
<evidence type="ECO:0000303" key="5">
    <source>
    </source>
</evidence>
<evidence type="ECO:0000305" key="6">
    <source>
    </source>
</evidence>
<dbReference type="EMBL" id="AF151374">
    <property type="protein sequence ID" value="AAD43976.1"/>
    <property type="molecule type" value="Genomic_DNA"/>
</dbReference>
<dbReference type="EMBL" id="AM884176">
    <property type="protein sequence ID" value="CAP03812.1"/>
    <property type="molecule type" value="Genomic_DNA"/>
</dbReference>
<dbReference type="RefSeq" id="WP_009873572.1">
    <property type="nucleotide sequence ID" value="NC_010287.1"/>
</dbReference>
<dbReference type="RefSeq" id="YP_001654456.1">
    <property type="nucleotide sequence ID" value="NC_010287.1"/>
</dbReference>
<dbReference type="KEGG" id="ctb:CTL0372"/>
<dbReference type="PATRIC" id="fig|471472.4.peg.403"/>
<dbReference type="HOGENOM" id="CLU_2380989_0_0_0"/>
<dbReference type="Proteomes" id="UP001154402">
    <property type="component" value="Chromosome"/>
</dbReference>
<dbReference type="GO" id="GO:0005576">
    <property type="term" value="C:extracellular region"/>
    <property type="evidence" value="ECO:0007669"/>
    <property type="project" value="UniProtKB-SubCell"/>
</dbReference>
<dbReference type="GO" id="GO:0033644">
    <property type="term" value="C:host cell membrane"/>
    <property type="evidence" value="ECO:0007669"/>
    <property type="project" value="UniProtKB-KW"/>
</dbReference>
<dbReference type="GO" id="GO:0140221">
    <property type="term" value="C:pathogen-containing vacuole membrane"/>
    <property type="evidence" value="ECO:0000314"/>
    <property type="project" value="UniProtKB"/>
</dbReference>
<dbReference type="InterPro" id="IPR035119">
    <property type="entry name" value="IncF"/>
</dbReference>
<dbReference type="Pfam" id="PF17626">
    <property type="entry name" value="IncF"/>
    <property type="match status" value="1"/>
</dbReference>
<reference key="1">
    <citation type="journal article" date="1999" name="Mol. Microbiol.">
        <title>Identification and characterization of a Chlamydia trachomatis early operon encoding four novel inclusion membrane proteins.</title>
        <authorList>
            <person name="Scidmore-Carlson M.A."/>
            <person name="Shaw E.I."/>
            <person name="Dooley C.A."/>
            <person name="Fischer E.R."/>
            <person name="Hackstadt T."/>
        </authorList>
    </citation>
    <scope>NUCLEOTIDE SEQUENCE [GENOMIC DNA]</scope>
    <scope>FUNCTION</scope>
    <scope>SUBCELLULAR LOCATION</scope>
    <scope>DEVELOPMENTAL STAGE</scope>
    <scope>INDUCTION</scope>
    <source>
        <strain>ATCC VR-902B / DSM 19102 / 434/Bu</strain>
    </source>
</reference>
<reference key="2">
    <citation type="journal article" date="2008" name="Genome Res.">
        <title>Chlamydia trachomatis: genome sequence analysis of lymphogranuloma venereum isolates.</title>
        <authorList>
            <person name="Thomson N.R."/>
            <person name="Holden M.T.G."/>
            <person name="Carder C."/>
            <person name="Lennard N."/>
            <person name="Lockey S.J."/>
            <person name="Marsh P."/>
            <person name="Skipp P."/>
            <person name="O'Connor C.D."/>
            <person name="Goodhead I."/>
            <person name="Norbertzcak H."/>
            <person name="Harris B."/>
            <person name="Ormond D."/>
            <person name="Rance R."/>
            <person name="Quail M.A."/>
            <person name="Parkhill J."/>
            <person name="Stephens R.S."/>
            <person name="Clarke I.N."/>
        </authorList>
    </citation>
    <scope>NUCLEOTIDE SEQUENCE [LARGE SCALE GENOMIC DNA]</scope>
    <source>
        <strain>ATCC VR-902B / DSM 19102 / 434/Bu</strain>
    </source>
</reference>
<reference key="3">
    <citation type="journal article" date="1999" name="Cell. Microbiol.">
        <title>The Chlamydia trachomatis IncA protein is required for homotypic vesicle fusion.</title>
        <authorList>
            <person name="Hackstadt T."/>
            <person name="Scidmore-Carlson M.A."/>
            <person name="Shaw E.I."/>
            <person name="Fischer E.R."/>
        </authorList>
    </citation>
    <scope>SUBCELLULAR LOCATION</scope>
    <scope>TOPOLOGY</scope>
    <source>
        <strain>ATCC VR-902B / DSM 19102 / 434/Bu</strain>
    </source>
</reference>
<reference key="4">
    <citation type="journal article" date="2015" name="Infect. Immun.">
        <title>Expression and localization of predicted inclusion membrane proteins in Chlamydia trachomatis.</title>
        <authorList>
            <person name="Weber M.M."/>
            <person name="Bauler L.D."/>
            <person name="Lam J."/>
            <person name="Hackstadt T."/>
        </authorList>
    </citation>
    <scope>SUBCELLULAR LOCATION</scope>
    <source>
        <strain>ATCC VR-902B / DSM 19102 / 434/Bu</strain>
    </source>
</reference>
<organism>
    <name type="scientific">Chlamydia trachomatis serovar L2 (strain ATCC VR-902B / DSM 19102 / 434/Bu)</name>
    <dbReference type="NCBI Taxonomy" id="471472"/>
    <lineage>
        <taxon>Bacteria</taxon>
        <taxon>Pseudomonadati</taxon>
        <taxon>Chlamydiota</taxon>
        <taxon>Chlamydiia</taxon>
        <taxon>Chlamydiales</taxon>
        <taxon>Chlamydiaceae</taxon>
        <taxon>Chlamydia/Chlamydophila group</taxon>
        <taxon>Chlamydia</taxon>
    </lineage>
</organism>
<name>INCF_CHLT2</name>
<feature type="chain" id="PRO_0000417581" description="Inclusion membrane protein F">
    <location>
        <begin position="1"/>
        <end position="104"/>
    </location>
</feature>
<feature type="transmembrane region" description="Helical" evidence="1">
    <location>
        <begin position="39"/>
        <end position="59"/>
    </location>
</feature>
<feature type="transmembrane region" description="Helical" evidence="1">
    <location>
        <begin position="70"/>
        <end position="90"/>
    </location>
</feature>
<sequence>MGDVMIQSVKTESGLVDGHHGSCDSLGCVVGALAKVAKLVVALAALVLNGALCVLSLVALCVGATPVGPLAVLVATTLASFLCVAYVLFIAAKDRGWIASTNKC</sequence>
<comment type="function">
    <text evidence="6">Inclusion membrane protein probably involved in early modification events of the chlamydial inclusion.</text>
</comment>
<comment type="subcellular location">
    <subcellularLocation>
        <location evidence="6">Secreted</location>
    </subcellularLocation>
    <subcellularLocation>
        <location evidence="2 3 4">Host vacuole</location>
        <location evidence="2 3 4">Host pathogen-containing vacuole</location>
        <location evidence="2 3 4">Host pathogen-containing vacuole membrane</location>
        <topology evidence="1">Multi-pass membrane protein</topology>
    </subcellularLocation>
    <text evidence="2 3 4 6">Secreted, probably by a type III secretion system (Probable). Localized in the inclusion membrane (PubMed:10447885, PubMed:11207546, PubMed:26416906). Inclusion membrane staining is punctate (PubMed:10447885). The C-terminus faces the host cytosol (PubMed:11207546).</text>
</comment>
<comment type="developmental stage">
    <text evidence="2">Not detected in reticulate bodies (RB) or in elementary bodies (EB).</text>
</comment>
<comment type="induction">
    <text evidence="2">Cotranscribed with incD, incE and incG within 2 hours after internalization.</text>
</comment>